<proteinExistence type="inferred from homology"/>
<gene>
    <name evidence="1" type="primary">ispF</name>
    <name type="ordered locus">BDI_2574</name>
</gene>
<comment type="function">
    <text evidence="1">Involved in the biosynthesis of isopentenyl diphosphate (IPP) and dimethylallyl diphosphate (DMAPP), two major building blocks of isoprenoid compounds. Catalyzes the conversion of 4-diphosphocytidyl-2-C-methyl-D-erythritol 2-phosphate (CDP-ME2P) to 2-C-methyl-D-erythritol 2,4-cyclodiphosphate (ME-CPP) with a corresponding release of cytidine 5-monophosphate (CMP).</text>
</comment>
<comment type="catalytic activity">
    <reaction evidence="1">
        <text>4-CDP-2-C-methyl-D-erythritol 2-phosphate = 2-C-methyl-D-erythritol 2,4-cyclic diphosphate + CMP</text>
        <dbReference type="Rhea" id="RHEA:23864"/>
        <dbReference type="ChEBI" id="CHEBI:57919"/>
        <dbReference type="ChEBI" id="CHEBI:58483"/>
        <dbReference type="ChEBI" id="CHEBI:60377"/>
        <dbReference type="EC" id="4.6.1.12"/>
    </reaction>
</comment>
<comment type="cofactor">
    <cofactor evidence="1">
        <name>a divalent metal cation</name>
        <dbReference type="ChEBI" id="CHEBI:60240"/>
    </cofactor>
    <text evidence="1">Binds 1 divalent metal cation per subunit.</text>
</comment>
<comment type="pathway">
    <text evidence="1">Isoprenoid biosynthesis; isopentenyl diphosphate biosynthesis via DXP pathway; isopentenyl diphosphate from 1-deoxy-D-xylulose 5-phosphate: step 4/6.</text>
</comment>
<comment type="subunit">
    <text evidence="1">Homotrimer.</text>
</comment>
<comment type="similarity">
    <text evidence="1">Belongs to the IspF family.</text>
</comment>
<name>ISPF_PARD8</name>
<reference key="1">
    <citation type="journal article" date="2007" name="PLoS Biol.">
        <title>Evolution of symbiotic bacteria in the distal human intestine.</title>
        <authorList>
            <person name="Xu J."/>
            <person name="Mahowald M.A."/>
            <person name="Ley R.E."/>
            <person name="Lozupone C.A."/>
            <person name="Hamady M."/>
            <person name="Martens E.C."/>
            <person name="Henrissat B."/>
            <person name="Coutinho P.M."/>
            <person name="Minx P."/>
            <person name="Latreille P."/>
            <person name="Cordum H."/>
            <person name="Van Brunt A."/>
            <person name="Kim K."/>
            <person name="Fulton R.S."/>
            <person name="Fulton L.A."/>
            <person name="Clifton S.W."/>
            <person name="Wilson R.K."/>
            <person name="Knight R.D."/>
            <person name="Gordon J.I."/>
        </authorList>
    </citation>
    <scope>NUCLEOTIDE SEQUENCE [LARGE SCALE GENOMIC DNA]</scope>
    <source>
        <strain>ATCC 8503 / DSM 20701 / CIP 104284 / JCM 5825 / NCTC 11152</strain>
    </source>
</reference>
<dbReference type="EC" id="4.6.1.12" evidence="1"/>
<dbReference type="EMBL" id="CP000140">
    <property type="protein sequence ID" value="ABR44293.1"/>
    <property type="molecule type" value="Genomic_DNA"/>
</dbReference>
<dbReference type="RefSeq" id="WP_005861223.1">
    <property type="nucleotide sequence ID" value="NZ_LR215978.1"/>
</dbReference>
<dbReference type="SMR" id="A6LF29"/>
<dbReference type="STRING" id="435591.BDI_2574"/>
<dbReference type="PaxDb" id="435591-BDI_2574"/>
<dbReference type="KEGG" id="pdi:BDI_2574"/>
<dbReference type="eggNOG" id="COG0245">
    <property type="taxonomic scope" value="Bacteria"/>
</dbReference>
<dbReference type="HOGENOM" id="CLU_084630_2_0_10"/>
<dbReference type="BioCyc" id="PDIS435591:G1G5A-2644-MONOMER"/>
<dbReference type="UniPathway" id="UPA00056">
    <property type="reaction ID" value="UER00095"/>
</dbReference>
<dbReference type="Proteomes" id="UP000000566">
    <property type="component" value="Chromosome"/>
</dbReference>
<dbReference type="GO" id="GO:0008685">
    <property type="term" value="F:2-C-methyl-D-erythritol 2,4-cyclodiphosphate synthase activity"/>
    <property type="evidence" value="ECO:0007669"/>
    <property type="project" value="UniProtKB-UniRule"/>
</dbReference>
<dbReference type="GO" id="GO:0046872">
    <property type="term" value="F:metal ion binding"/>
    <property type="evidence" value="ECO:0007669"/>
    <property type="project" value="UniProtKB-KW"/>
</dbReference>
<dbReference type="GO" id="GO:0019288">
    <property type="term" value="P:isopentenyl diphosphate biosynthetic process, methylerythritol 4-phosphate pathway"/>
    <property type="evidence" value="ECO:0007669"/>
    <property type="project" value="UniProtKB-UniRule"/>
</dbReference>
<dbReference type="GO" id="GO:0016114">
    <property type="term" value="P:terpenoid biosynthetic process"/>
    <property type="evidence" value="ECO:0007669"/>
    <property type="project" value="InterPro"/>
</dbReference>
<dbReference type="CDD" id="cd00554">
    <property type="entry name" value="MECDP_synthase"/>
    <property type="match status" value="1"/>
</dbReference>
<dbReference type="FunFam" id="3.30.1330.50:FF:000001">
    <property type="entry name" value="2-C-methyl-D-erythritol 2,4-cyclodiphosphate synthase"/>
    <property type="match status" value="1"/>
</dbReference>
<dbReference type="Gene3D" id="3.30.1330.50">
    <property type="entry name" value="2-C-methyl-D-erythritol 2,4-cyclodiphosphate synthase"/>
    <property type="match status" value="1"/>
</dbReference>
<dbReference type="HAMAP" id="MF_00107">
    <property type="entry name" value="IspF"/>
    <property type="match status" value="1"/>
</dbReference>
<dbReference type="InterPro" id="IPR003526">
    <property type="entry name" value="MECDP_synthase"/>
</dbReference>
<dbReference type="InterPro" id="IPR020555">
    <property type="entry name" value="MECDP_synthase_CS"/>
</dbReference>
<dbReference type="InterPro" id="IPR036571">
    <property type="entry name" value="MECDP_synthase_sf"/>
</dbReference>
<dbReference type="NCBIfam" id="TIGR00151">
    <property type="entry name" value="ispF"/>
    <property type="match status" value="1"/>
</dbReference>
<dbReference type="PANTHER" id="PTHR43181">
    <property type="entry name" value="2-C-METHYL-D-ERYTHRITOL 2,4-CYCLODIPHOSPHATE SYNTHASE, CHLOROPLASTIC"/>
    <property type="match status" value="1"/>
</dbReference>
<dbReference type="PANTHER" id="PTHR43181:SF1">
    <property type="entry name" value="2-C-METHYL-D-ERYTHRITOL 2,4-CYCLODIPHOSPHATE SYNTHASE, CHLOROPLASTIC"/>
    <property type="match status" value="1"/>
</dbReference>
<dbReference type="Pfam" id="PF02542">
    <property type="entry name" value="YgbB"/>
    <property type="match status" value="1"/>
</dbReference>
<dbReference type="SUPFAM" id="SSF69765">
    <property type="entry name" value="IpsF-like"/>
    <property type="match status" value="1"/>
</dbReference>
<dbReference type="PROSITE" id="PS01350">
    <property type="entry name" value="ISPF"/>
    <property type="match status" value="1"/>
</dbReference>
<sequence length="161" mass="17743">MKIRVGFGYDVHALVPDRELWLGGIKIEHTLGLLGHSDADVLIHAICDALLGAANMRDIGYHFPDTAGEYKNIDSKILLRDTMRLLREAGYELGNIDATVAAERPKLNPHIPLMKKTLAEVMNVDEEDISIKATTTEKLGFTGRQEGISAYATVLIQRMGS</sequence>
<evidence type="ECO:0000255" key="1">
    <source>
        <dbReference type="HAMAP-Rule" id="MF_00107"/>
    </source>
</evidence>
<accession>A6LF29</accession>
<feature type="chain" id="PRO_1000022858" description="2-C-methyl-D-erythritol 2,4-cyclodiphosphate synthase">
    <location>
        <begin position="1"/>
        <end position="161"/>
    </location>
</feature>
<feature type="binding site" evidence="1">
    <location>
        <begin position="10"/>
        <end position="12"/>
    </location>
    <ligand>
        <name>4-CDP-2-C-methyl-D-erythritol 2-phosphate</name>
        <dbReference type="ChEBI" id="CHEBI:57919"/>
    </ligand>
</feature>
<feature type="binding site" evidence="1">
    <location>
        <position position="10"/>
    </location>
    <ligand>
        <name>a divalent metal cation</name>
        <dbReference type="ChEBI" id="CHEBI:60240"/>
    </ligand>
</feature>
<feature type="binding site" evidence="1">
    <location>
        <position position="12"/>
    </location>
    <ligand>
        <name>a divalent metal cation</name>
        <dbReference type="ChEBI" id="CHEBI:60240"/>
    </ligand>
</feature>
<feature type="binding site" evidence="1">
    <location>
        <begin position="36"/>
        <end position="37"/>
    </location>
    <ligand>
        <name>4-CDP-2-C-methyl-D-erythritol 2-phosphate</name>
        <dbReference type="ChEBI" id="CHEBI:57919"/>
    </ligand>
</feature>
<feature type="binding site" evidence="1">
    <location>
        <position position="44"/>
    </location>
    <ligand>
        <name>a divalent metal cation</name>
        <dbReference type="ChEBI" id="CHEBI:60240"/>
    </ligand>
</feature>
<feature type="binding site" evidence="1">
    <location>
        <begin position="58"/>
        <end position="60"/>
    </location>
    <ligand>
        <name>4-CDP-2-C-methyl-D-erythritol 2-phosphate</name>
        <dbReference type="ChEBI" id="CHEBI:57919"/>
    </ligand>
</feature>
<feature type="binding site" evidence="1">
    <location>
        <begin position="134"/>
        <end position="137"/>
    </location>
    <ligand>
        <name>4-CDP-2-C-methyl-D-erythritol 2-phosphate</name>
        <dbReference type="ChEBI" id="CHEBI:57919"/>
    </ligand>
</feature>
<feature type="binding site" evidence="1">
    <location>
        <position position="141"/>
    </location>
    <ligand>
        <name>4-CDP-2-C-methyl-D-erythritol 2-phosphate</name>
        <dbReference type="ChEBI" id="CHEBI:57919"/>
    </ligand>
</feature>
<feature type="binding site" evidence="1">
    <location>
        <position position="144"/>
    </location>
    <ligand>
        <name>4-CDP-2-C-methyl-D-erythritol 2-phosphate</name>
        <dbReference type="ChEBI" id="CHEBI:57919"/>
    </ligand>
</feature>
<feature type="site" description="Transition state stabilizer" evidence="1">
    <location>
        <position position="36"/>
    </location>
</feature>
<feature type="site" description="Transition state stabilizer" evidence="1">
    <location>
        <position position="135"/>
    </location>
</feature>
<organism>
    <name type="scientific">Parabacteroides distasonis (strain ATCC 8503 / DSM 20701 / CIP 104284 / JCM 5825 / NCTC 11152)</name>
    <dbReference type="NCBI Taxonomy" id="435591"/>
    <lineage>
        <taxon>Bacteria</taxon>
        <taxon>Pseudomonadati</taxon>
        <taxon>Bacteroidota</taxon>
        <taxon>Bacteroidia</taxon>
        <taxon>Bacteroidales</taxon>
        <taxon>Tannerellaceae</taxon>
        <taxon>Parabacteroides</taxon>
    </lineage>
</organism>
<protein>
    <recommendedName>
        <fullName evidence="1">2-C-methyl-D-erythritol 2,4-cyclodiphosphate synthase</fullName>
        <shortName evidence="1">MECDP-synthase</shortName>
        <shortName evidence="1">MECPP-synthase</shortName>
        <shortName evidence="1">MECPS</shortName>
        <ecNumber evidence="1">4.6.1.12</ecNumber>
    </recommendedName>
</protein>
<keyword id="KW-0414">Isoprene biosynthesis</keyword>
<keyword id="KW-0456">Lyase</keyword>
<keyword id="KW-0479">Metal-binding</keyword>
<keyword id="KW-1185">Reference proteome</keyword>